<name>SEY12_TRIV3</name>
<reference key="1">
    <citation type="journal article" date="2007" name="Science">
        <title>Draft genome sequence of the sexually transmitted pathogen Trichomonas vaginalis.</title>
        <authorList>
            <person name="Carlton J.M."/>
            <person name="Hirt R.P."/>
            <person name="Silva J.C."/>
            <person name="Delcher A.L."/>
            <person name="Schatz M."/>
            <person name="Zhao Q."/>
            <person name="Wortman J.R."/>
            <person name="Bidwell S.L."/>
            <person name="Alsmark U.C.M."/>
            <person name="Besteiro S."/>
            <person name="Sicheritz-Ponten T."/>
            <person name="Noel C.J."/>
            <person name="Dacks J.B."/>
            <person name="Foster P.G."/>
            <person name="Simillion C."/>
            <person name="Van de Peer Y."/>
            <person name="Miranda-Saavedra D."/>
            <person name="Barton G.J."/>
            <person name="Westrop G.D."/>
            <person name="Mueller S."/>
            <person name="Dessi D."/>
            <person name="Fiori P.L."/>
            <person name="Ren Q."/>
            <person name="Paulsen I."/>
            <person name="Zhang H."/>
            <person name="Bastida-Corcuera F.D."/>
            <person name="Simoes-Barbosa A."/>
            <person name="Brown M.T."/>
            <person name="Hayes R.D."/>
            <person name="Mukherjee M."/>
            <person name="Okumura C.Y."/>
            <person name="Schneider R."/>
            <person name="Smith A.J."/>
            <person name="Vanacova S."/>
            <person name="Villalvazo M."/>
            <person name="Haas B.J."/>
            <person name="Pertea M."/>
            <person name="Feldblyum T.V."/>
            <person name="Utterback T.R."/>
            <person name="Shu C.L."/>
            <person name="Osoegawa K."/>
            <person name="de Jong P.J."/>
            <person name="Hrdy I."/>
            <person name="Horvathova L."/>
            <person name="Zubacova Z."/>
            <person name="Dolezal P."/>
            <person name="Malik S.B."/>
            <person name="Logsdon J.M. Jr."/>
            <person name="Henze K."/>
            <person name="Gupta A."/>
            <person name="Wang C.C."/>
            <person name="Dunne R.L."/>
            <person name="Upcroft J.A."/>
            <person name="Upcroft P."/>
            <person name="White O."/>
            <person name="Salzberg S.L."/>
            <person name="Tang P."/>
            <person name="Chiu C.-H."/>
            <person name="Lee Y.-S."/>
            <person name="Embley T.M."/>
            <person name="Coombs G.H."/>
            <person name="Mottram J.C."/>
            <person name="Tachezy J."/>
            <person name="Fraser-Liggett C.M."/>
            <person name="Johnson P.J."/>
        </authorList>
    </citation>
    <scope>NUCLEOTIDE SEQUENCE [LARGE SCALE GENOMIC DNA]</scope>
    <source>
        <strain>ATCC PRA-98 / G3</strain>
    </source>
</reference>
<dbReference type="EC" id="3.6.5.-" evidence="1"/>
<dbReference type="EMBL" id="DS113411">
    <property type="protein sequence ID" value="EAY06973.1"/>
    <property type="molecule type" value="Genomic_DNA"/>
</dbReference>
<dbReference type="RefSeq" id="XP_001319196.1">
    <property type="nucleotide sequence ID" value="XM_001319161.1"/>
</dbReference>
<dbReference type="SMR" id="A2EK80"/>
<dbReference type="FunCoup" id="A2EK80">
    <property type="interactions" value="174"/>
</dbReference>
<dbReference type="STRING" id="5722.A2EK80"/>
<dbReference type="KEGG" id="tva:TVAG_2v0838650"/>
<dbReference type="VEuPathDB" id="TrichDB:TVAG_100140"/>
<dbReference type="VEuPathDB" id="TrichDB:TVAGG3_0838650"/>
<dbReference type="eggNOG" id="KOG2203">
    <property type="taxonomic scope" value="Eukaryota"/>
</dbReference>
<dbReference type="InParanoid" id="A2EK80"/>
<dbReference type="OMA" id="WAIVLMI"/>
<dbReference type="OrthoDB" id="1597724at2759"/>
<dbReference type="Proteomes" id="UP000001542">
    <property type="component" value="Unassembled WGS sequence"/>
</dbReference>
<dbReference type="GO" id="GO:0005783">
    <property type="term" value="C:endoplasmic reticulum"/>
    <property type="evidence" value="ECO:0000318"/>
    <property type="project" value="GO_Central"/>
</dbReference>
<dbReference type="GO" id="GO:0005789">
    <property type="term" value="C:endoplasmic reticulum membrane"/>
    <property type="evidence" value="ECO:0007669"/>
    <property type="project" value="UniProtKB-SubCell"/>
</dbReference>
<dbReference type="GO" id="GO:0005525">
    <property type="term" value="F:GTP binding"/>
    <property type="evidence" value="ECO:0007669"/>
    <property type="project" value="UniProtKB-UniRule"/>
</dbReference>
<dbReference type="GO" id="GO:0003924">
    <property type="term" value="F:GTPase activity"/>
    <property type="evidence" value="ECO:0000318"/>
    <property type="project" value="GO_Central"/>
</dbReference>
<dbReference type="GO" id="GO:0016320">
    <property type="term" value="P:endoplasmic reticulum membrane fusion"/>
    <property type="evidence" value="ECO:0000318"/>
    <property type="project" value="GO_Central"/>
</dbReference>
<dbReference type="CDD" id="cd01851">
    <property type="entry name" value="GBP"/>
    <property type="match status" value="1"/>
</dbReference>
<dbReference type="FunFam" id="3.40.50.300:FF:000727">
    <property type="entry name" value="Protein SEY1 homolog"/>
    <property type="match status" value="1"/>
</dbReference>
<dbReference type="Gene3D" id="3.40.50.300">
    <property type="entry name" value="P-loop containing nucleotide triphosphate hydrolases"/>
    <property type="match status" value="1"/>
</dbReference>
<dbReference type="HAMAP" id="MF_03109">
    <property type="entry name" value="Sey1"/>
    <property type="match status" value="1"/>
</dbReference>
<dbReference type="InterPro" id="IPR030386">
    <property type="entry name" value="G_GB1_RHD3_dom"/>
</dbReference>
<dbReference type="InterPro" id="IPR027417">
    <property type="entry name" value="P-loop_NTPase"/>
</dbReference>
<dbReference type="InterPro" id="IPR008803">
    <property type="entry name" value="RHD3/Sey1"/>
</dbReference>
<dbReference type="InterPro" id="IPR046758">
    <property type="entry name" value="Sey1/RHD3-like_3HB"/>
</dbReference>
<dbReference type="PANTHER" id="PTHR45923">
    <property type="entry name" value="PROTEIN SEY1"/>
    <property type="match status" value="1"/>
</dbReference>
<dbReference type="PANTHER" id="PTHR45923:SF2">
    <property type="entry name" value="PROTEIN SEY1"/>
    <property type="match status" value="1"/>
</dbReference>
<dbReference type="Pfam" id="PF05879">
    <property type="entry name" value="RHD3_GTPase"/>
    <property type="match status" value="1"/>
</dbReference>
<dbReference type="Pfam" id="PF20428">
    <property type="entry name" value="Sey1_3HB"/>
    <property type="match status" value="2"/>
</dbReference>
<dbReference type="SUPFAM" id="SSF52540">
    <property type="entry name" value="P-loop containing nucleoside triphosphate hydrolases"/>
    <property type="match status" value="1"/>
</dbReference>
<dbReference type="PROSITE" id="PS51715">
    <property type="entry name" value="G_GB1_RHD3"/>
    <property type="match status" value="1"/>
</dbReference>
<comment type="function">
    <text evidence="1">Probable GTP-binding protein that may be involved in cell development.</text>
</comment>
<comment type="subcellular location">
    <subcellularLocation>
        <location evidence="1">Endoplasmic reticulum membrane</location>
        <topology evidence="1">Multi-pass membrane protein</topology>
    </subcellularLocation>
</comment>
<comment type="similarity">
    <text evidence="2">Belongs to the TRAFAC class dynamin-like GTPase superfamily. GB1/RHD3 GTPase family. RHD3 subfamily.</text>
</comment>
<sequence length="792" mass="91331">MEQIITGDGALVSNLDEKITSSGIADAGVDYHTVAIIGPQSSGKSTILNLLFGTKFATMNEQRGRQQTTQGIHAAKSVNDPILLFDVEGCDSRERGDSDALFERKSALFALALSEVLVINMWESDIGRYQASNIPMLKTVFEVNIQLFLAQNTTKSKILFVIRDSTAVNFEAIKFQLNRDITNIWDEINLPDSFKGKQMEDFFEFLYFPIHHMVIQRDQFDADVNTLRKWFNEPPLKDYLFAEKSTKVVPGEGLSQYIRNLWEVINENKELNIPSQRTMLARFKCDENAAEALSKFNKFVEENLQRDPDQPITIIQDFKPLCDKSVENALKYYHDNSWRYSEAVVKEREAQLKQEISDVLLPYFNSQCKLFCDNTLKRFNEFISSIDQELHVGGTWESDVQGKIDSLNMDLKKNIKDTTVEPFSWNYPDYEVMKVMFNATESMKGKLVKQLEQTIITEQMRSFDEQANDILAKVDNLMWDNLRNLIRKVSTETTQNTNQVLKTNVSGVHARNDIKRDFQTHTISLVRESANYIVLKMKNTFDRTFKYEKNGRPRVWTRRDNINQIYENSRDAGLKVLRHFTYCRLAESDDEVKPNDPLTQVLIPHERASEIEDKFERIIIHAYEEARANIKAQANREQIPGWAWLATFLCSSNYIMKLLANPIFFALAVIIGGIYSILRMLGLQDVAKKTLLDKFNSLLKNLTKDENEQEKEGEENEEPEEDQPLPNNNRKRMKLMEKSVSQEFSQKSIYKSSEYKGSGDSLMIPQTSPLGNNDSPEKPRDSLTRTQSLEFM</sequence>
<feature type="chain" id="PRO_0000384961" description="Protein SEY1 homolog 2">
    <location>
        <begin position="1"/>
        <end position="792"/>
    </location>
</feature>
<feature type="topological domain" description="Cytoplasmic" evidence="1">
    <location>
        <begin position="1"/>
        <end position="638"/>
    </location>
</feature>
<feature type="transmembrane region" description="Helical" evidence="1">
    <location>
        <begin position="639"/>
        <end position="659"/>
    </location>
</feature>
<feature type="topological domain" description="Lumenal" evidence="1">
    <location>
        <begin position="660"/>
        <end position="662"/>
    </location>
</feature>
<feature type="transmembrane region" description="Helical" evidence="1">
    <location>
        <begin position="663"/>
        <end position="683"/>
    </location>
</feature>
<feature type="topological domain" description="Cytoplasmic" evidence="1">
    <location>
        <begin position="684"/>
        <end position="792"/>
    </location>
</feature>
<feature type="domain" description="GB1/RHD3-type G" evidence="2">
    <location>
        <begin position="28"/>
        <end position="245"/>
    </location>
</feature>
<feature type="region of interest" description="Disordered" evidence="3">
    <location>
        <begin position="703"/>
        <end position="792"/>
    </location>
</feature>
<feature type="coiled-coil region" evidence="1">
    <location>
        <begin position="691"/>
        <end position="718"/>
    </location>
</feature>
<feature type="compositionally biased region" description="Acidic residues" evidence="3">
    <location>
        <begin position="707"/>
        <end position="723"/>
    </location>
</feature>
<feature type="compositionally biased region" description="Polar residues" evidence="3">
    <location>
        <begin position="739"/>
        <end position="751"/>
    </location>
</feature>
<feature type="compositionally biased region" description="Polar residues" evidence="3">
    <location>
        <begin position="764"/>
        <end position="774"/>
    </location>
</feature>
<feature type="binding site" evidence="1">
    <location>
        <begin position="38"/>
        <end position="45"/>
    </location>
    <ligand>
        <name>GTP</name>
        <dbReference type="ChEBI" id="CHEBI:37565"/>
    </ligand>
</feature>
<evidence type="ECO:0000255" key="1">
    <source>
        <dbReference type="HAMAP-Rule" id="MF_03109"/>
    </source>
</evidence>
<evidence type="ECO:0000255" key="2">
    <source>
        <dbReference type="PROSITE-ProRule" id="PRU01052"/>
    </source>
</evidence>
<evidence type="ECO:0000256" key="3">
    <source>
        <dbReference type="SAM" id="MobiDB-lite"/>
    </source>
</evidence>
<organism>
    <name type="scientific">Trichomonas vaginalis (strain ATCC PRA-98 / G3)</name>
    <dbReference type="NCBI Taxonomy" id="412133"/>
    <lineage>
        <taxon>Eukaryota</taxon>
        <taxon>Metamonada</taxon>
        <taxon>Parabasalia</taxon>
        <taxon>Trichomonadida</taxon>
        <taxon>Trichomonadidae</taxon>
        <taxon>Trichomonas</taxon>
    </lineage>
</organism>
<proteinExistence type="inferred from homology"/>
<keyword id="KW-0175">Coiled coil</keyword>
<keyword id="KW-0256">Endoplasmic reticulum</keyword>
<keyword id="KW-0342">GTP-binding</keyword>
<keyword id="KW-0378">Hydrolase</keyword>
<keyword id="KW-0472">Membrane</keyword>
<keyword id="KW-0547">Nucleotide-binding</keyword>
<keyword id="KW-1185">Reference proteome</keyword>
<keyword id="KW-0812">Transmembrane</keyword>
<keyword id="KW-1133">Transmembrane helix</keyword>
<protein>
    <recommendedName>
        <fullName evidence="1">Protein SEY1 homolog 2</fullName>
        <ecNumber evidence="1">3.6.5.-</ecNumber>
    </recommendedName>
</protein>
<gene>
    <name type="ORF">TVAG_100140</name>
</gene>
<accession>A2EK80</accession>